<comment type="function">
    <text evidence="1">Down-regulates the EGF receptor and prevents cytolysis by TNF.</text>
</comment>
<comment type="subcellular location">
    <subcellularLocation>
        <location evidence="3">Host membrane</location>
        <topology evidence="3">Single-pass membrane protein</topology>
    </subcellularLocation>
</comment>
<comment type="PTM">
    <text evidence="1">Phosphorylated on serine; O-glycosylated, but not N-glycosylated.</text>
</comment>
<comment type="similarity">
    <text evidence="3">Belongs to the adenoviridae E3_14 family.</text>
</comment>
<reference key="1">
    <citation type="journal article" date="1994" name="J. Virol.">
        <title>Nucleotide sequence of human adenovirus type 12 DNA: comparative functional analysis.</title>
        <authorList>
            <person name="Sprengel J."/>
            <person name="Schmitz B."/>
            <person name="Heuss-Neitzel D."/>
            <person name="Zock C."/>
            <person name="Doerfler W."/>
        </authorList>
    </citation>
    <scope>NUCLEOTIDE SEQUENCE [LARGE SCALE GENOMIC DNA]</scope>
</reference>
<organismHost>
    <name type="scientific">Homo sapiens</name>
    <name type="common">Human</name>
    <dbReference type="NCBI Taxonomy" id="9606"/>
</organismHost>
<feature type="signal peptide" evidence="2">
    <location>
        <begin position="1"/>
        <end position="16"/>
    </location>
</feature>
<feature type="chain" id="PRO_0000036481" description="Early E3B 12.7 kDa protein">
    <location>
        <begin position="17"/>
        <end position="110"/>
    </location>
</feature>
<feature type="transmembrane region" description="Helical" evidence="2">
    <location>
        <begin position="37"/>
        <end position="57"/>
    </location>
</feature>
<dbReference type="EMBL" id="X73487">
    <property type="protein sequence ID" value="CAA51899.1"/>
    <property type="molecule type" value="Genomic_DNA"/>
</dbReference>
<dbReference type="PIR" id="S33950">
    <property type="entry name" value="S33950"/>
</dbReference>
<dbReference type="RefSeq" id="NP_040931.1">
    <property type="nucleotide sequence ID" value="NC_001460.1"/>
</dbReference>
<dbReference type="DNASU" id="1460862"/>
<dbReference type="GeneID" id="1460862"/>
<dbReference type="Proteomes" id="UP000004993">
    <property type="component" value="Genome"/>
</dbReference>
<dbReference type="GO" id="GO:0033644">
    <property type="term" value="C:host cell membrane"/>
    <property type="evidence" value="ECO:0007669"/>
    <property type="project" value="UniProtKB-SubCell"/>
</dbReference>
<dbReference type="GO" id="GO:0016020">
    <property type="term" value="C:membrane"/>
    <property type="evidence" value="ECO:0007669"/>
    <property type="project" value="UniProtKB-KW"/>
</dbReference>
<dbReference type="GO" id="GO:0009966">
    <property type="term" value="P:regulation of signal transduction"/>
    <property type="evidence" value="ECO:0007669"/>
    <property type="project" value="InterPro"/>
</dbReference>
<dbReference type="InterPro" id="IPR008131">
    <property type="entry name" value="Adeno_E3_14_5"/>
</dbReference>
<dbReference type="Pfam" id="PF04834">
    <property type="entry name" value="Adeno_E3_14_5"/>
    <property type="match status" value="1"/>
</dbReference>
<organism>
    <name type="scientific">Human adenovirus A serotype 12</name>
    <name type="common">HAdV-12</name>
    <name type="synonym">Human adenovirus 12</name>
    <dbReference type="NCBI Taxonomy" id="28282"/>
    <lineage>
        <taxon>Viruses</taxon>
        <taxon>Varidnaviria</taxon>
        <taxon>Bamfordvirae</taxon>
        <taxon>Preplasmiviricota</taxon>
        <taxon>Tectiliviricetes</taxon>
        <taxon>Rowavirales</taxon>
        <taxon>Adenoviridae</taxon>
        <taxon>Mastadenovirus</taxon>
        <taxon>Human mastadenovirus A</taxon>
    </lineage>
</organism>
<evidence type="ECO:0000250" key="1"/>
<evidence type="ECO:0000255" key="2"/>
<evidence type="ECO:0000305" key="3"/>
<accession>P36707</accession>
<name>E3B14_ADE12</name>
<keyword id="KW-0244">Early protein</keyword>
<keyword id="KW-0325">Glycoprotein</keyword>
<keyword id="KW-1043">Host membrane</keyword>
<keyword id="KW-0472">Membrane</keyword>
<keyword id="KW-0597">Phosphoprotein</keyword>
<keyword id="KW-1185">Reference proteome</keyword>
<keyword id="KW-0732">Signal</keyword>
<keyword id="KW-0812">Transmembrane</keyword>
<keyword id="KW-1133">Transmembrane helix</keyword>
<sequence>MKTALVLFFMLIPVWASSCQLHKPWNFLDCYTKETNYIGWVYGIMSGLVFVSSVVSLQLYARLNFSWNKYTDDLPEYPNPQDDLPLNIVFPEPPRPPSVVSYFKFTGEDD</sequence>
<protein>
    <recommendedName>
        <fullName>Early E3B 12.7 kDa protein</fullName>
    </recommendedName>
</protein>
<proteinExistence type="inferred from homology"/>